<reference key="1">
    <citation type="journal article" date="2003" name="J. Bacteriol.">
        <title>Comparative genomics of Salmonella enterica serovar Typhi strains Ty2 and CT18.</title>
        <authorList>
            <person name="Deng W."/>
            <person name="Liou S.-R."/>
            <person name="Plunkett G. III"/>
            <person name="Mayhew G.F."/>
            <person name="Rose D.J."/>
            <person name="Burland V."/>
            <person name="Kodoyianni V."/>
            <person name="Schwartz D.C."/>
            <person name="Blattner F.R."/>
        </authorList>
    </citation>
    <scope>NUCLEOTIDE SEQUENCE [LARGE SCALE GENOMIC DNA]</scope>
    <source>
        <strain>ATCC 700931 / Ty2</strain>
    </source>
</reference>
<reference key="2">
    <citation type="journal article" date="2001" name="Nature">
        <title>Complete genome sequence of a multiple drug resistant Salmonella enterica serovar Typhi CT18.</title>
        <authorList>
            <person name="Parkhill J."/>
            <person name="Dougan G."/>
            <person name="James K.D."/>
            <person name="Thomson N.R."/>
            <person name="Pickard D."/>
            <person name="Wain J."/>
            <person name="Churcher C.M."/>
            <person name="Mungall K.L."/>
            <person name="Bentley S.D."/>
            <person name="Holden M.T.G."/>
            <person name="Sebaihia M."/>
            <person name="Baker S."/>
            <person name="Basham D."/>
            <person name="Brooks K."/>
            <person name="Chillingworth T."/>
            <person name="Connerton P."/>
            <person name="Cronin A."/>
            <person name="Davis P."/>
            <person name="Davies R.M."/>
            <person name="Dowd L."/>
            <person name="White N."/>
            <person name="Farrar J."/>
            <person name="Feltwell T."/>
            <person name="Hamlin N."/>
            <person name="Haque A."/>
            <person name="Hien T.T."/>
            <person name="Holroyd S."/>
            <person name="Jagels K."/>
            <person name="Krogh A."/>
            <person name="Larsen T.S."/>
            <person name="Leather S."/>
            <person name="Moule S."/>
            <person name="O'Gaora P."/>
            <person name="Parry C."/>
            <person name="Quail M.A."/>
            <person name="Rutherford K.M."/>
            <person name="Simmonds M."/>
            <person name="Skelton J."/>
            <person name="Stevens K."/>
            <person name="Whitehead S."/>
            <person name="Barrell B.G."/>
        </authorList>
    </citation>
    <scope>NUCLEOTIDE SEQUENCE [LARGE SCALE GENOMIC DNA]</scope>
    <source>
        <strain>CT18</strain>
    </source>
</reference>
<accession>Q8XEW6</accession>
<accession>Q7ALM6</accession>
<dbReference type="EMBL" id="AE014613">
    <property type="protein sequence ID" value="AAO72037.1"/>
    <property type="status" value="ALT_INIT"/>
    <property type="molecule type" value="Genomic_DNA"/>
</dbReference>
<dbReference type="EMBL" id="AL513382">
    <property type="protein sequence ID" value="CAD03397.1"/>
    <property type="status" value="ALT_INIT"/>
    <property type="molecule type" value="Genomic_DNA"/>
</dbReference>
<dbReference type="RefSeq" id="NP_458974.1">
    <property type="nucleotide sequence ID" value="NC_003198.1"/>
</dbReference>
<dbReference type="RefSeq" id="WP_000490276.1">
    <property type="nucleotide sequence ID" value="NZ_WSUR01000014.1"/>
</dbReference>
<dbReference type="STRING" id="220341.gene:17588731"/>
<dbReference type="KEGG" id="stt:t4605"/>
<dbReference type="KEGG" id="sty:STY4912"/>
<dbReference type="PATRIC" id="fig|220341.7.peg.5034"/>
<dbReference type="eggNOG" id="COG5487">
    <property type="taxonomic scope" value="Bacteria"/>
</dbReference>
<dbReference type="HOGENOM" id="CLU_187346_2_0_6"/>
<dbReference type="OMA" id="LRWTVIF"/>
<dbReference type="Proteomes" id="UP000000541">
    <property type="component" value="Chromosome"/>
</dbReference>
<dbReference type="Proteomes" id="UP000002670">
    <property type="component" value="Chromosome"/>
</dbReference>
<dbReference type="GO" id="GO:0005886">
    <property type="term" value="C:plasma membrane"/>
    <property type="evidence" value="ECO:0007669"/>
    <property type="project" value="UniProtKB-SubCell"/>
</dbReference>
<dbReference type="HAMAP" id="MF_01361">
    <property type="entry name" value="UPF0391"/>
    <property type="match status" value="1"/>
</dbReference>
<dbReference type="InterPro" id="IPR009760">
    <property type="entry name" value="DUF1328"/>
</dbReference>
<dbReference type="NCBIfam" id="NF010229">
    <property type="entry name" value="PRK13682.1-4"/>
    <property type="match status" value="1"/>
</dbReference>
<dbReference type="NCBIfam" id="NF010230">
    <property type="entry name" value="PRK13682.1-5"/>
    <property type="match status" value="1"/>
</dbReference>
<dbReference type="Pfam" id="PF07043">
    <property type="entry name" value="DUF1328"/>
    <property type="match status" value="1"/>
</dbReference>
<dbReference type="PIRSF" id="PIRSF036466">
    <property type="entry name" value="UCP036466"/>
    <property type="match status" value="1"/>
</dbReference>
<protein>
    <recommendedName>
        <fullName evidence="1">UPF0391 membrane protein YtjA</fullName>
    </recommendedName>
</protein>
<evidence type="ECO:0000255" key="1">
    <source>
        <dbReference type="HAMAP-Rule" id="MF_01361"/>
    </source>
</evidence>
<evidence type="ECO:0000305" key="2"/>
<comment type="subcellular location">
    <subcellularLocation>
        <location evidence="1">Cell membrane</location>
        <topology evidence="1">Multi-pass membrane protein</topology>
    </subcellularLocation>
</comment>
<comment type="similarity">
    <text evidence="1">Belongs to the UPF0391 family.</text>
</comment>
<comment type="sequence caution" evidence="2">
    <conflict type="erroneous initiation">
        <sequence resource="EMBL-CDS" id="AAO72037"/>
    </conflict>
</comment>
<comment type="sequence caution" evidence="2">
    <conflict type="erroneous initiation">
        <sequence resource="EMBL-CDS" id="CAD03397"/>
    </conflict>
</comment>
<feature type="chain" id="PRO_0000256786" description="UPF0391 membrane protein YtjA">
    <location>
        <begin position="1"/>
        <end position="53"/>
    </location>
</feature>
<feature type="transmembrane region" description="Helical" evidence="1">
    <location>
        <begin position="4"/>
        <end position="24"/>
    </location>
</feature>
<feature type="transmembrane region" description="Helical" evidence="1">
    <location>
        <begin position="30"/>
        <end position="48"/>
    </location>
</feature>
<name>YTJA_SALTI</name>
<proteinExistence type="inferred from homology"/>
<keyword id="KW-1003">Cell membrane</keyword>
<keyword id="KW-0472">Membrane</keyword>
<keyword id="KW-0812">Transmembrane</keyword>
<keyword id="KW-1133">Transmembrane helix</keyword>
<sequence length="53" mass="5522">MFRWGIIFLVIALIAAALGFGGLAGTAAGAAKIVFVVGIVLFLVSLFMGRKRP</sequence>
<gene>
    <name evidence="1" type="primary">ytjA</name>
    <name type="ordered locus">STY4912</name>
    <name type="ordered locus">t4605</name>
</gene>
<organism>
    <name type="scientific">Salmonella typhi</name>
    <dbReference type="NCBI Taxonomy" id="90370"/>
    <lineage>
        <taxon>Bacteria</taxon>
        <taxon>Pseudomonadati</taxon>
        <taxon>Pseudomonadota</taxon>
        <taxon>Gammaproteobacteria</taxon>
        <taxon>Enterobacterales</taxon>
        <taxon>Enterobacteriaceae</taxon>
        <taxon>Salmonella</taxon>
    </lineage>
</organism>